<evidence type="ECO:0000255" key="1">
    <source>
        <dbReference type="HAMAP-Rule" id="MF_00141"/>
    </source>
</evidence>
<comment type="function">
    <text evidence="1">Involved in peptide bond synthesis. Alleviates ribosome stalling that occurs when 3 or more consecutive Pro residues or the sequence PPG is present in a protein, possibly by augmenting the peptidyl transferase activity of the ribosome. Modification of Lys-37 is required for alleviation.</text>
</comment>
<comment type="pathway">
    <text evidence="1">Protein biosynthesis; polypeptide chain elongation.</text>
</comment>
<comment type="subcellular location">
    <subcellularLocation>
        <location evidence="1">Cytoplasm</location>
    </subcellularLocation>
</comment>
<comment type="PTM">
    <text evidence="1">May be beta-lysylated on the epsilon-amino group of Lys-37 by the combined action of EpmA and EpmB, and then hydroxylated on the C5 position of the same residue by EpmC (if this protein is present). Lysylation is critical for the stimulatory effect of EF-P on peptide-bond formation. The lysylation moiety may extend toward the peptidyltransferase center and stabilize the terminal 3-CCA end of the tRNA. Hydroxylation of the C5 position on Lys-37 may allow additional potential stabilizing hydrogen-bond interactions with the P-tRNA.</text>
</comment>
<comment type="similarity">
    <text evidence="1">Belongs to the elongation factor P family.</text>
</comment>
<accession>Q6FAA9</accession>
<sequence length="192" mass="21121">MPVMASYSTNEFKQGLKVMLDGNPCSIMENEYVKPGKGQAFNRVKLRNLKTGKVLEKTFKSGDSLEAADIVEVEMDYLYNDGELWNFMDPVTFEQIAADKVAMGDAAKWLKDDSNEKCSIMLFNGVPLNVSAPNFVVLKIVETDPGVRGDTSGGGGKPAKLETGAVVRVPLFVQQEDSVRVDTRTGEYLERA</sequence>
<protein>
    <recommendedName>
        <fullName evidence="1">Elongation factor P</fullName>
        <shortName evidence="1">EF-P</shortName>
    </recommendedName>
</protein>
<name>EFP_ACIAD</name>
<dbReference type="EMBL" id="CR543861">
    <property type="protein sequence ID" value="CAG69004.1"/>
    <property type="molecule type" value="Genomic_DNA"/>
</dbReference>
<dbReference type="SMR" id="Q6FAA9"/>
<dbReference type="STRING" id="202950.GCA_001485005_00185"/>
<dbReference type="KEGG" id="aci:ACIAD2206"/>
<dbReference type="eggNOG" id="COG0231">
    <property type="taxonomic scope" value="Bacteria"/>
</dbReference>
<dbReference type="HOGENOM" id="CLU_074944_0_0_6"/>
<dbReference type="UniPathway" id="UPA00345"/>
<dbReference type="Proteomes" id="UP000000430">
    <property type="component" value="Chromosome"/>
</dbReference>
<dbReference type="GO" id="GO:0005737">
    <property type="term" value="C:cytoplasm"/>
    <property type="evidence" value="ECO:0007669"/>
    <property type="project" value="UniProtKB-SubCell"/>
</dbReference>
<dbReference type="GO" id="GO:0003746">
    <property type="term" value="F:translation elongation factor activity"/>
    <property type="evidence" value="ECO:0007669"/>
    <property type="project" value="UniProtKB-UniRule"/>
</dbReference>
<dbReference type="GO" id="GO:0043043">
    <property type="term" value="P:peptide biosynthetic process"/>
    <property type="evidence" value="ECO:0007669"/>
    <property type="project" value="InterPro"/>
</dbReference>
<dbReference type="CDD" id="cd04470">
    <property type="entry name" value="S1_EF-P_repeat_1"/>
    <property type="match status" value="1"/>
</dbReference>
<dbReference type="CDD" id="cd05794">
    <property type="entry name" value="S1_EF-P_repeat_2"/>
    <property type="match status" value="1"/>
</dbReference>
<dbReference type="FunFam" id="2.30.30.30:FF:000003">
    <property type="entry name" value="Elongation factor P"/>
    <property type="match status" value="1"/>
</dbReference>
<dbReference type="FunFam" id="2.40.50.140:FF:000004">
    <property type="entry name" value="Elongation factor P"/>
    <property type="match status" value="1"/>
</dbReference>
<dbReference type="FunFam" id="2.40.50.140:FF:000009">
    <property type="entry name" value="Elongation factor P"/>
    <property type="match status" value="1"/>
</dbReference>
<dbReference type="Gene3D" id="2.30.30.30">
    <property type="match status" value="1"/>
</dbReference>
<dbReference type="Gene3D" id="2.40.50.140">
    <property type="entry name" value="Nucleic acid-binding proteins"/>
    <property type="match status" value="2"/>
</dbReference>
<dbReference type="HAMAP" id="MF_00141">
    <property type="entry name" value="EF_P"/>
    <property type="match status" value="1"/>
</dbReference>
<dbReference type="InterPro" id="IPR015365">
    <property type="entry name" value="Elong-fact-P_C"/>
</dbReference>
<dbReference type="InterPro" id="IPR012340">
    <property type="entry name" value="NA-bd_OB-fold"/>
</dbReference>
<dbReference type="InterPro" id="IPR014722">
    <property type="entry name" value="Rib_uL2_dom2"/>
</dbReference>
<dbReference type="InterPro" id="IPR020599">
    <property type="entry name" value="Transl_elong_fac_P/YeiP"/>
</dbReference>
<dbReference type="InterPro" id="IPR013185">
    <property type="entry name" value="Transl_elong_KOW-like"/>
</dbReference>
<dbReference type="InterPro" id="IPR001059">
    <property type="entry name" value="Transl_elong_P/YeiP_cen"/>
</dbReference>
<dbReference type="InterPro" id="IPR011768">
    <property type="entry name" value="Transl_elongation_fac_P"/>
</dbReference>
<dbReference type="InterPro" id="IPR008991">
    <property type="entry name" value="Translation_prot_SH3-like_sf"/>
</dbReference>
<dbReference type="NCBIfam" id="TIGR00038">
    <property type="entry name" value="efp"/>
    <property type="match status" value="1"/>
</dbReference>
<dbReference type="NCBIfam" id="NF001810">
    <property type="entry name" value="PRK00529.1"/>
    <property type="match status" value="1"/>
</dbReference>
<dbReference type="PANTHER" id="PTHR30053">
    <property type="entry name" value="ELONGATION FACTOR P"/>
    <property type="match status" value="1"/>
</dbReference>
<dbReference type="PANTHER" id="PTHR30053:SF12">
    <property type="entry name" value="ELONGATION FACTOR P (EF-P) FAMILY PROTEIN"/>
    <property type="match status" value="1"/>
</dbReference>
<dbReference type="Pfam" id="PF01132">
    <property type="entry name" value="EFP"/>
    <property type="match status" value="1"/>
</dbReference>
<dbReference type="Pfam" id="PF08207">
    <property type="entry name" value="EFP_N"/>
    <property type="match status" value="1"/>
</dbReference>
<dbReference type="Pfam" id="PF09285">
    <property type="entry name" value="Elong-fact-P_C"/>
    <property type="match status" value="1"/>
</dbReference>
<dbReference type="PIRSF" id="PIRSF005901">
    <property type="entry name" value="EF-P"/>
    <property type="match status" value="1"/>
</dbReference>
<dbReference type="SMART" id="SM01185">
    <property type="entry name" value="EFP"/>
    <property type="match status" value="1"/>
</dbReference>
<dbReference type="SMART" id="SM00841">
    <property type="entry name" value="Elong-fact-P_C"/>
    <property type="match status" value="1"/>
</dbReference>
<dbReference type="SUPFAM" id="SSF50249">
    <property type="entry name" value="Nucleic acid-binding proteins"/>
    <property type="match status" value="2"/>
</dbReference>
<dbReference type="SUPFAM" id="SSF50104">
    <property type="entry name" value="Translation proteins SH3-like domain"/>
    <property type="match status" value="1"/>
</dbReference>
<gene>
    <name evidence="1" type="primary">efp</name>
    <name type="ordered locus">ACIAD2206</name>
</gene>
<feature type="chain" id="PRO_0000094184" description="Elongation factor P">
    <location>
        <begin position="1"/>
        <end position="192"/>
    </location>
</feature>
<feature type="modified residue" description="N6-(3,6-diaminohexanoyl)-5-hydroxylysine" evidence="1">
    <location>
        <position position="37"/>
    </location>
</feature>
<keyword id="KW-0963">Cytoplasm</keyword>
<keyword id="KW-0251">Elongation factor</keyword>
<keyword id="KW-0379">Hydroxylation</keyword>
<keyword id="KW-0648">Protein biosynthesis</keyword>
<organism>
    <name type="scientific">Acinetobacter baylyi (strain ATCC 33305 / BD413 / ADP1)</name>
    <dbReference type="NCBI Taxonomy" id="62977"/>
    <lineage>
        <taxon>Bacteria</taxon>
        <taxon>Pseudomonadati</taxon>
        <taxon>Pseudomonadota</taxon>
        <taxon>Gammaproteobacteria</taxon>
        <taxon>Moraxellales</taxon>
        <taxon>Moraxellaceae</taxon>
        <taxon>Acinetobacter</taxon>
    </lineage>
</organism>
<proteinExistence type="inferred from homology"/>
<reference key="1">
    <citation type="journal article" date="2004" name="Nucleic Acids Res.">
        <title>Unique features revealed by the genome sequence of Acinetobacter sp. ADP1, a versatile and naturally transformation competent bacterium.</title>
        <authorList>
            <person name="Barbe V."/>
            <person name="Vallenet D."/>
            <person name="Fonknechten N."/>
            <person name="Kreimeyer A."/>
            <person name="Oztas S."/>
            <person name="Labarre L."/>
            <person name="Cruveiller S."/>
            <person name="Robert C."/>
            <person name="Duprat S."/>
            <person name="Wincker P."/>
            <person name="Ornston L.N."/>
            <person name="Weissenbach J."/>
            <person name="Marliere P."/>
            <person name="Cohen G.N."/>
            <person name="Medigue C."/>
        </authorList>
    </citation>
    <scope>NUCLEOTIDE SEQUENCE [LARGE SCALE GENOMIC DNA]</scope>
    <source>
        <strain>ATCC 33305 / BD413 / ADP1</strain>
    </source>
</reference>